<evidence type="ECO:0000255" key="1">
    <source>
        <dbReference type="HAMAP-Rule" id="MF_00319"/>
    </source>
</evidence>
<reference key="1">
    <citation type="journal article" date="2009" name="Vaccine">
        <title>Whole genome sequence analysis of Mycobacterium bovis bacillus Calmette-Guerin (BCG) Tokyo 172: a comparative study of BCG vaccine substrains.</title>
        <authorList>
            <person name="Seki M."/>
            <person name="Honda I."/>
            <person name="Fujita I."/>
            <person name="Yano I."/>
            <person name="Yamamoto S."/>
            <person name="Koyama A."/>
        </authorList>
    </citation>
    <scope>NUCLEOTIDE SEQUENCE [LARGE SCALE GENOMIC DNA]</scope>
    <source>
        <strain>BCG / Tokyo 172 / ATCC 35737 / TMC 1019</strain>
    </source>
</reference>
<proteinExistence type="inferred from homology"/>
<accession>C1AQK4</accession>
<feature type="chain" id="PRO_1000133035" description="CDP-diacylglycerol pyrophosphatase">
    <location>
        <begin position="1"/>
        <end position="260"/>
    </location>
</feature>
<feature type="transmembrane region" description="Helical" evidence="1">
    <location>
        <begin position="10"/>
        <end position="30"/>
    </location>
</feature>
<comment type="catalytic activity">
    <reaction evidence="1">
        <text>a CDP-1,2-diacyl-sn-glycerol + H2O = a 1,2-diacyl-sn-glycero-3-phosphate + CMP + 2 H(+)</text>
        <dbReference type="Rhea" id="RHEA:15221"/>
        <dbReference type="ChEBI" id="CHEBI:15377"/>
        <dbReference type="ChEBI" id="CHEBI:15378"/>
        <dbReference type="ChEBI" id="CHEBI:58332"/>
        <dbReference type="ChEBI" id="CHEBI:58608"/>
        <dbReference type="ChEBI" id="CHEBI:60377"/>
        <dbReference type="EC" id="3.6.1.26"/>
    </reaction>
</comment>
<comment type="pathway">
    <text evidence="1">Phospholipid metabolism; CDP-diacylglycerol degradation; phosphatidate from CDP-diacylglycerol: step 1/1.</text>
</comment>
<comment type="subcellular location">
    <subcellularLocation>
        <location evidence="1">Cell membrane</location>
        <topology evidence="1">Single-pass membrane protein</topology>
    </subcellularLocation>
</comment>
<comment type="similarity">
    <text evidence="1">Belongs to the Cdh family.</text>
</comment>
<name>CDH_MYCBT</name>
<keyword id="KW-1003">Cell membrane</keyword>
<keyword id="KW-0378">Hydrolase</keyword>
<keyword id="KW-0444">Lipid biosynthesis</keyword>
<keyword id="KW-0443">Lipid metabolism</keyword>
<keyword id="KW-0472">Membrane</keyword>
<keyword id="KW-0594">Phospholipid biosynthesis</keyword>
<keyword id="KW-1208">Phospholipid metabolism</keyword>
<keyword id="KW-0812">Transmembrane</keyword>
<keyword id="KW-1133">Transmembrane helix</keyword>
<gene>
    <name evidence="1" type="primary">cdh</name>
    <name type="ordered locus">JTY_2299</name>
</gene>
<organism>
    <name type="scientific">Mycobacterium bovis (strain BCG / Tokyo 172 / ATCC 35737 / TMC 1019)</name>
    <dbReference type="NCBI Taxonomy" id="561275"/>
    <lineage>
        <taxon>Bacteria</taxon>
        <taxon>Bacillati</taxon>
        <taxon>Actinomycetota</taxon>
        <taxon>Actinomycetes</taxon>
        <taxon>Mycobacteriales</taxon>
        <taxon>Mycobacteriaceae</taxon>
        <taxon>Mycobacterium</taxon>
        <taxon>Mycobacterium tuberculosis complex</taxon>
    </lineage>
</organism>
<dbReference type="EC" id="3.6.1.26" evidence="1"/>
<dbReference type="EMBL" id="AP010918">
    <property type="protein sequence ID" value="BAH26583.1"/>
    <property type="molecule type" value="Genomic_DNA"/>
</dbReference>
<dbReference type="RefSeq" id="WP_003411717.1">
    <property type="nucleotide sequence ID" value="NZ_CP014566.1"/>
</dbReference>
<dbReference type="SMR" id="C1AQK4"/>
<dbReference type="KEGG" id="mbt:JTY_2299"/>
<dbReference type="HOGENOM" id="CLU_077117_1_0_11"/>
<dbReference type="UniPathway" id="UPA00609">
    <property type="reaction ID" value="UER00664"/>
</dbReference>
<dbReference type="GO" id="GO:0005886">
    <property type="term" value="C:plasma membrane"/>
    <property type="evidence" value="ECO:0007669"/>
    <property type="project" value="UniProtKB-SubCell"/>
</dbReference>
<dbReference type="GO" id="GO:0008715">
    <property type="term" value="F:CDP-diacylglycerol diphosphatase activity"/>
    <property type="evidence" value="ECO:0007669"/>
    <property type="project" value="UniProtKB-UniRule"/>
</dbReference>
<dbReference type="GO" id="GO:0046342">
    <property type="term" value="P:CDP-diacylglycerol catabolic process"/>
    <property type="evidence" value="ECO:0007669"/>
    <property type="project" value="UniProtKB-UniRule"/>
</dbReference>
<dbReference type="GO" id="GO:0008654">
    <property type="term" value="P:phospholipid biosynthetic process"/>
    <property type="evidence" value="ECO:0007669"/>
    <property type="project" value="UniProtKB-KW"/>
</dbReference>
<dbReference type="Gene3D" id="3.30.428.30">
    <property type="entry name" value="HIT family - CDH-like"/>
    <property type="match status" value="1"/>
</dbReference>
<dbReference type="HAMAP" id="MF_00319">
    <property type="entry name" value="Cdh"/>
    <property type="match status" value="1"/>
</dbReference>
<dbReference type="InterPro" id="IPR003763">
    <property type="entry name" value="CDP-diacylglyc_Pase"/>
</dbReference>
<dbReference type="InterPro" id="IPR036265">
    <property type="entry name" value="HIT-like_sf"/>
</dbReference>
<dbReference type="NCBIfam" id="NF003982">
    <property type="entry name" value="PRK05471.1-1"/>
    <property type="match status" value="1"/>
</dbReference>
<dbReference type="Pfam" id="PF02611">
    <property type="entry name" value="CDH"/>
    <property type="match status" value="1"/>
</dbReference>
<dbReference type="PIRSF" id="PIRSF001273">
    <property type="entry name" value="CDH"/>
    <property type="match status" value="1"/>
</dbReference>
<dbReference type="SUPFAM" id="SSF54197">
    <property type="entry name" value="HIT-like"/>
    <property type="match status" value="1"/>
</dbReference>
<sequence>MPKSRRAVSLSVLIGAVIAALAGALIAVTVPARPNRPEADREALWKIVHDRCEFGYRRTGAYAPCTFVDEQSGTALYKADFDPYQFLLIPLARITGIEDPALRESAGRNYLYDAWAARFLVTARLNNSLPESDVVLTINPKNARTQDQLHIHISCSSPTTSAALRNVDTSEYVGWKQLPIDLGGRRFQGLAVDTKAFESRNLFRDIYLKVTADGKKMENASIAVANVAQDQFLLLLAEGTEDQPVAAETLQDHDCSITKS</sequence>
<protein>
    <recommendedName>
        <fullName evidence="1">CDP-diacylglycerol pyrophosphatase</fullName>
        <ecNumber evidence="1">3.6.1.26</ecNumber>
    </recommendedName>
    <alternativeName>
        <fullName evidence="1">CDP-diacylglycerol phosphatidylhydrolase</fullName>
    </alternativeName>
    <alternativeName>
        <fullName evidence="1">CDP-diglyceride hydrolase</fullName>
    </alternativeName>
</protein>